<proteinExistence type="inferred from homology"/>
<keyword id="KW-0067">ATP-binding</keyword>
<keyword id="KW-0414">Isoprene biosynthesis</keyword>
<keyword id="KW-0418">Kinase</keyword>
<keyword id="KW-0547">Nucleotide-binding</keyword>
<keyword id="KW-0808">Transferase</keyword>
<comment type="function">
    <text evidence="1">Catalyzes the phosphorylation of the position 2 hydroxy group of 4-diphosphocytidyl-2C-methyl-D-erythritol.</text>
</comment>
<comment type="catalytic activity">
    <reaction evidence="1">
        <text>4-CDP-2-C-methyl-D-erythritol + ATP = 4-CDP-2-C-methyl-D-erythritol 2-phosphate + ADP + H(+)</text>
        <dbReference type="Rhea" id="RHEA:18437"/>
        <dbReference type="ChEBI" id="CHEBI:15378"/>
        <dbReference type="ChEBI" id="CHEBI:30616"/>
        <dbReference type="ChEBI" id="CHEBI:57823"/>
        <dbReference type="ChEBI" id="CHEBI:57919"/>
        <dbReference type="ChEBI" id="CHEBI:456216"/>
        <dbReference type="EC" id="2.7.1.148"/>
    </reaction>
</comment>
<comment type="pathway">
    <text evidence="1">Isoprenoid biosynthesis; isopentenyl diphosphate biosynthesis via DXP pathway; isopentenyl diphosphate from 1-deoxy-D-xylulose 5-phosphate: step 3/6.</text>
</comment>
<comment type="similarity">
    <text evidence="1">Belongs to the GHMP kinase family. IspE subfamily.</text>
</comment>
<dbReference type="EC" id="2.7.1.148" evidence="1"/>
<dbReference type="EMBL" id="CP000560">
    <property type="protein sequence ID" value="ABS72495.1"/>
    <property type="molecule type" value="Genomic_DNA"/>
</dbReference>
<dbReference type="RefSeq" id="WP_007409927.1">
    <property type="nucleotide sequence ID" value="NC_009725.2"/>
</dbReference>
<dbReference type="SMR" id="A7Z0G9"/>
<dbReference type="GeneID" id="93079193"/>
<dbReference type="KEGG" id="bay:RBAM_000550"/>
<dbReference type="HOGENOM" id="CLU_053057_1_1_9"/>
<dbReference type="UniPathway" id="UPA00056">
    <property type="reaction ID" value="UER00094"/>
</dbReference>
<dbReference type="Proteomes" id="UP000001120">
    <property type="component" value="Chromosome"/>
</dbReference>
<dbReference type="GO" id="GO:0050515">
    <property type="term" value="F:4-(cytidine 5'-diphospho)-2-C-methyl-D-erythritol kinase activity"/>
    <property type="evidence" value="ECO:0007669"/>
    <property type="project" value="UniProtKB-UniRule"/>
</dbReference>
<dbReference type="GO" id="GO:0005524">
    <property type="term" value="F:ATP binding"/>
    <property type="evidence" value="ECO:0007669"/>
    <property type="project" value="UniProtKB-UniRule"/>
</dbReference>
<dbReference type="GO" id="GO:0019288">
    <property type="term" value="P:isopentenyl diphosphate biosynthetic process, methylerythritol 4-phosphate pathway"/>
    <property type="evidence" value="ECO:0007669"/>
    <property type="project" value="UniProtKB-UniRule"/>
</dbReference>
<dbReference type="GO" id="GO:0016114">
    <property type="term" value="P:terpenoid biosynthetic process"/>
    <property type="evidence" value="ECO:0007669"/>
    <property type="project" value="InterPro"/>
</dbReference>
<dbReference type="FunFam" id="3.30.230.10:FF:000029">
    <property type="entry name" value="4-diphosphocytidyl-2-C-methyl-D-erythritol kinase"/>
    <property type="match status" value="1"/>
</dbReference>
<dbReference type="FunFam" id="3.30.70.890:FF:000006">
    <property type="entry name" value="4-diphosphocytidyl-2-C-methyl-D-erythritol kinase"/>
    <property type="match status" value="1"/>
</dbReference>
<dbReference type="Gene3D" id="3.30.230.10">
    <property type="match status" value="1"/>
</dbReference>
<dbReference type="Gene3D" id="3.30.70.890">
    <property type="entry name" value="GHMP kinase, C-terminal domain"/>
    <property type="match status" value="1"/>
</dbReference>
<dbReference type="HAMAP" id="MF_00061">
    <property type="entry name" value="IspE"/>
    <property type="match status" value="1"/>
</dbReference>
<dbReference type="InterPro" id="IPR013750">
    <property type="entry name" value="GHMP_kinase_C_dom"/>
</dbReference>
<dbReference type="InterPro" id="IPR036554">
    <property type="entry name" value="GHMP_kinase_C_sf"/>
</dbReference>
<dbReference type="InterPro" id="IPR006204">
    <property type="entry name" value="GHMP_kinase_N_dom"/>
</dbReference>
<dbReference type="InterPro" id="IPR004424">
    <property type="entry name" value="IspE"/>
</dbReference>
<dbReference type="InterPro" id="IPR020568">
    <property type="entry name" value="Ribosomal_Su5_D2-typ_SF"/>
</dbReference>
<dbReference type="InterPro" id="IPR014721">
    <property type="entry name" value="Ribsml_uS5_D2-typ_fold_subgr"/>
</dbReference>
<dbReference type="NCBIfam" id="TIGR00154">
    <property type="entry name" value="ispE"/>
    <property type="match status" value="1"/>
</dbReference>
<dbReference type="NCBIfam" id="NF011202">
    <property type="entry name" value="PRK14608.1"/>
    <property type="match status" value="1"/>
</dbReference>
<dbReference type="PANTHER" id="PTHR43527">
    <property type="entry name" value="4-DIPHOSPHOCYTIDYL-2-C-METHYL-D-ERYTHRITOL KINASE, CHLOROPLASTIC"/>
    <property type="match status" value="1"/>
</dbReference>
<dbReference type="PANTHER" id="PTHR43527:SF2">
    <property type="entry name" value="4-DIPHOSPHOCYTIDYL-2-C-METHYL-D-ERYTHRITOL KINASE, CHLOROPLASTIC"/>
    <property type="match status" value="1"/>
</dbReference>
<dbReference type="Pfam" id="PF08544">
    <property type="entry name" value="GHMP_kinases_C"/>
    <property type="match status" value="1"/>
</dbReference>
<dbReference type="Pfam" id="PF00288">
    <property type="entry name" value="GHMP_kinases_N"/>
    <property type="match status" value="1"/>
</dbReference>
<dbReference type="PIRSF" id="PIRSF010376">
    <property type="entry name" value="IspE"/>
    <property type="match status" value="1"/>
</dbReference>
<dbReference type="SUPFAM" id="SSF55060">
    <property type="entry name" value="GHMP Kinase, C-terminal domain"/>
    <property type="match status" value="1"/>
</dbReference>
<dbReference type="SUPFAM" id="SSF54211">
    <property type="entry name" value="Ribosomal protein S5 domain 2-like"/>
    <property type="match status" value="1"/>
</dbReference>
<reference key="1">
    <citation type="journal article" date="2007" name="Nat. Biotechnol.">
        <title>Comparative analysis of the complete genome sequence of the plant growth-promoting bacterium Bacillus amyloliquefaciens FZB42.</title>
        <authorList>
            <person name="Chen X.H."/>
            <person name="Koumoutsi A."/>
            <person name="Scholz R."/>
            <person name="Eisenreich A."/>
            <person name="Schneider K."/>
            <person name="Heinemeyer I."/>
            <person name="Morgenstern B."/>
            <person name="Voss B."/>
            <person name="Hess W.R."/>
            <person name="Reva O."/>
            <person name="Junge H."/>
            <person name="Voigt B."/>
            <person name="Jungblut P.R."/>
            <person name="Vater J."/>
            <person name="Suessmuth R."/>
            <person name="Liesegang H."/>
            <person name="Strittmatter A."/>
            <person name="Gottschalk G."/>
            <person name="Borriss R."/>
        </authorList>
    </citation>
    <scope>NUCLEOTIDE SEQUENCE [LARGE SCALE GENOMIC DNA]</scope>
    <source>
        <strain>DSM 23117 / BGSC 10A6 / LMG 26770 / FZB42</strain>
    </source>
</reference>
<feature type="chain" id="PRO_1000007810" description="4-diphosphocytidyl-2-C-methyl-D-erythritol kinase">
    <location>
        <begin position="1"/>
        <end position="289"/>
    </location>
</feature>
<feature type="active site" evidence="1">
    <location>
        <position position="10"/>
    </location>
</feature>
<feature type="active site" evidence="1">
    <location>
        <position position="136"/>
    </location>
</feature>
<feature type="binding site" evidence="1">
    <location>
        <begin position="94"/>
        <end position="104"/>
    </location>
    <ligand>
        <name>ATP</name>
        <dbReference type="ChEBI" id="CHEBI:30616"/>
    </ligand>
</feature>
<gene>
    <name evidence="1" type="primary">ispE</name>
    <name type="ordered locus">RBAM_000550</name>
</gene>
<evidence type="ECO:0000255" key="1">
    <source>
        <dbReference type="HAMAP-Rule" id="MF_00061"/>
    </source>
</evidence>
<accession>A7Z0G9</accession>
<protein>
    <recommendedName>
        <fullName evidence="1">4-diphosphocytidyl-2-C-methyl-D-erythritol kinase</fullName>
        <shortName evidence="1">CMK</shortName>
        <ecNumber evidence="1">2.7.1.148</ecNumber>
    </recommendedName>
    <alternativeName>
        <fullName evidence="1">4-(cytidine-5'-diphospho)-2-C-methyl-D-erythritol kinase</fullName>
    </alternativeName>
</protein>
<sequence>MRILEKAPAKINLSLDVTSKRPDGYHEVEMIMTTIDLADRIELTELPENVIRVASHNRFVPDDQRNLAYQAAKLLKERFQVKKGVSIMITKVIPVAAGLAGGSSDAAATLRGLNRLWDLKLSVEELAELGAEIGSDVSFCVYGGTALATGRGEKIRHISAPPHCWVVLAKPTIGVSTAEVYRRLNLQQVRHPDVQAMIDAIEEKSFQKVCGQLGNVLESVTLSLHPEVAMIKNQMKRFGADAVLMSGSGPTVFGLVQYESKVQRIYNGLRGFCDQVYAVRMIGEQNALD</sequence>
<name>ISPE_BACVZ</name>
<organism>
    <name type="scientific">Bacillus velezensis (strain DSM 23117 / BGSC 10A6 / LMG 26770 / FZB42)</name>
    <name type="common">Bacillus amyloliquefaciens subsp. plantarum</name>
    <dbReference type="NCBI Taxonomy" id="326423"/>
    <lineage>
        <taxon>Bacteria</taxon>
        <taxon>Bacillati</taxon>
        <taxon>Bacillota</taxon>
        <taxon>Bacilli</taxon>
        <taxon>Bacillales</taxon>
        <taxon>Bacillaceae</taxon>
        <taxon>Bacillus</taxon>
        <taxon>Bacillus amyloliquefaciens group</taxon>
    </lineage>
</organism>